<gene>
    <name type="primary">pst-2</name>
    <name type="ORF">F54E7.1</name>
</gene>
<comment type="function">
    <text evidence="1">Mediates the transport of adenosine 3'-phospho 5'-phosphosulfate (PAPS), from cytosol into Golgi. PAPS is a universal sulfuryl donor for sulfation events that take place in the Golgi (By similarity).</text>
</comment>
<comment type="subcellular location">
    <subcellularLocation>
        <location evidence="1">Golgi apparatus membrane</location>
        <topology evidence="1">Multi-pass membrane protein</topology>
    </subcellularLocation>
</comment>
<comment type="alternative products">
    <event type="alternative splicing"/>
    <isoform>
        <id>Q20787-1</id>
        <name>a</name>
        <sequence type="displayed"/>
    </isoform>
    <isoform>
        <id>Q20787-2</id>
        <name>b</name>
        <sequence type="described" ref="VSP_028734"/>
    </isoform>
</comment>
<comment type="similarity">
    <text evidence="3">Belongs to the nucleotide-sugar transporter family. SLC35B subfamily.</text>
</comment>
<reference key="1">
    <citation type="journal article" date="1998" name="Science">
        <title>Genome sequence of the nematode C. elegans: a platform for investigating biology.</title>
        <authorList>
            <consortium name="The C. elegans sequencing consortium"/>
        </authorList>
    </citation>
    <scope>NUCLEOTIDE SEQUENCE [LARGE SCALE GENOMIC DNA]</scope>
    <scope>ALTERNATIVE SPLICING</scope>
    <source>
        <strain>Bristol N2</strain>
    </source>
</reference>
<sequence length="364" mass="40836">MTAAQIHSDCSVHMLPRHVKEDVEPIHLLGFNIARKPKWLQFVLLSLAIFILYIGYGYMQELIFKLPGMKPFGWTLTLIQFLIYSGCGYTECIIWHNTKRMIPWRIYGVIAFFTVATMGLSNASVGYLNYPTQVIFKCCKLIPVLIGGILIQGKRYGWIDIGAAMLMSLGIIMFTLADNKVSPNFDSRGYIMICGALLADAVIGNIQEKNMKKYGGSSNEMVLYSYGIGSVFIFAFVVLSGEVFSAIPFFLENSWKTFGYALILSCLGYLGVNVVLTHIKVFGALVAVTVTTLRKALTIILSFMLFSKPFTIEYVYAGSVVMLAIYLNLYSKNKTSWDNMIRRFVARAMGYHDVSVARKDPMTV</sequence>
<proteinExistence type="inferred from homology"/>
<protein>
    <recommendedName>
        <fullName>Adenosine 3'-phospho 5'-phosphosulfate transporter 2</fullName>
    </recommendedName>
    <alternativeName>
        <fullName>Adenosine 3'-phosphate 5'-phosphosulfate transporter</fullName>
    </alternativeName>
    <alternativeName>
        <fullName>PAPS transporter 2</fullName>
    </alternativeName>
    <alternativeName>
        <fullName>Solute carrier family 35 member B3 homolog</fullName>
    </alternativeName>
</protein>
<evidence type="ECO:0000250" key="1"/>
<evidence type="ECO:0000255" key="2"/>
<evidence type="ECO:0000305" key="3"/>
<keyword id="KW-0025">Alternative splicing</keyword>
<keyword id="KW-0333">Golgi apparatus</keyword>
<keyword id="KW-0472">Membrane</keyword>
<keyword id="KW-1185">Reference proteome</keyword>
<keyword id="KW-0812">Transmembrane</keyword>
<keyword id="KW-1133">Transmembrane helix</keyword>
<keyword id="KW-0813">Transport</keyword>
<dbReference type="EMBL" id="FO080172">
    <property type="protein sequence ID" value="CCD61761.1"/>
    <property type="molecule type" value="Genomic_DNA"/>
</dbReference>
<dbReference type="EMBL" id="FO080172">
    <property type="protein sequence ID" value="CCD61762.1"/>
    <property type="molecule type" value="Genomic_DNA"/>
</dbReference>
<dbReference type="PIR" id="T34304">
    <property type="entry name" value="T34304"/>
</dbReference>
<dbReference type="RefSeq" id="NP_001040855.1">
    <molecule id="Q20787-1"/>
    <property type="nucleotide sequence ID" value="NM_001047390.4"/>
</dbReference>
<dbReference type="RefSeq" id="NP_001040856.1">
    <molecule id="Q20787-2"/>
    <property type="nucleotide sequence ID" value="NM_001047391.4"/>
</dbReference>
<dbReference type="SMR" id="Q20787"/>
<dbReference type="FunCoup" id="Q20787">
    <property type="interactions" value="2189"/>
</dbReference>
<dbReference type="STRING" id="6239.F54E7.1a.1"/>
<dbReference type="PaxDb" id="6239-F54E7.1a"/>
<dbReference type="EnsemblMetazoa" id="F54E7.1a.1">
    <molecule id="Q20787-1"/>
    <property type="protein sequence ID" value="F54E7.1a.1"/>
    <property type="gene ID" value="WBGene00018827"/>
</dbReference>
<dbReference type="EnsemblMetazoa" id="F54E7.1b.1">
    <molecule id="Q20787-2"/>
    <property type="protein sequence ID" value="F54E7.1b.1"/>
    <property type="gene ID" value="WBGene00018827"/>
</dbReference>
<dbReference type="GeneID" id="175787"/>
<dbReference type="KEGG" id="cel:CELE_F54E7.1"/>
<dbReference type="UCSC" id="F54E7.1a">
    <molecule id="Q20787-1"/>
    <property type="organism name" value="c. elegans"/>
</dbReference>
<dbReference type="AGR" id="WB:WBGene00018827"/>
<dbReference type="CTD" id="175787"/>
<dbReference type="WormBase" id="F54E7.1a">
    <molecule id="Q20787-1"/>
    <property type="protein sequence ID" value="CE01312"/>
    <property type="gene ID" value="WBGene00018827"/>
    <property type="gene designation" value="pst-2"/>
</dbReference>
<dbReference type="WormBase" id="F54E7.1b">
    <molecule id="Q20787-2"/>
    <property type="protein sequence ID" value="CE40069"/>
    <property type="gene ID" value="WBGene00018827"/>
    <property type="gene designation" value="pst-2"/>
</dbReference>
<dbReference type="eggNOG" id="KOG1582">
    <property type="taxonomic scope" value="Eukaryota"/>
</dbReference>
<dbReference type="GeneTree" id="ENSGT00940000157040"/>
<dbReference type="HOGENOM" id="CLU_036019_2_0_1"/>
<dbReference type="InParanoid" id="Q20787"/>
<dbReference type="OMA" id="YNRTTQF"/>
<dbReference type="OrthoDB" id="438495at2759"/>
<dbReference type="PhylomeDB" id="Q20787"/>
<dbReference type="Reactome" id="R-CEL-174362">
    <property type="pathway name" value="Transport and synthesis of PAPS"/>
</dbReference>
<dbReference type="Reactome" id="R-CEL-727802">
    <property type="pathway name" value="Transport of nucleotide sugars"/>
</dbReference>
<dbReference type="PRO" id="PR:Q20787"/>
<dbReference type="Proteomes" id="UP000001940">
    <property type="component" value="Chromosome III"/>
</dbReference>
<dbReference type="Bgee" id="WBGene00018827">
    <property type="expression patterns" value="Expressed in germ line (C elegans) and 4 other cell types or tissues"/>
</dbReference>
<dbReference type="GO" id="GO:0005789">
    <property type="term" value="C:endoplasmic reticulum membrane"/>
    <property type="evidence" value="ECO:0000318"/>
    <property type="project" value="GO_Central"/>
</dbReference>
<dbReference type="GO" id="GO:0005794">
    <property type="term" value="C:Golgi apparatus"/>
    <property type="evidence" value="ECO:0000314"/>
    <property type="project" value="WormBase"/>
</dbReference>
<dbReference type="GO" id="GO:1990674">
    <property type="term" value="C:Golgi cis cisterna membrane"/>
    <property type="evidence" value="ECO:0000314"/>
    <property type="project" value="WormBase"/>
</dbReference>
<dbReference type="GO" id="GO:1990675">
    <property type="term" value="C:Golgi medial cisterna membrane"/>
    <property type="evidence" value="ECO:0000314"/>
    <property type="project" value="WormBase"/>
</dbReference>
<dbReference type="GO" id="GO:0000139">
    <property type="term" value="C:Golgi membrane"/>
    <property type="evidence" value="ECO:0000318"/>
    <property type="project" value="GO_Central"/>
</dbReference>
<dbReference type="GO" id="GO:0046964">
    <property type="term" value="F:3'-phosphoadenosine 5'-phosphosulfate transmembrane transporter activity"/>
    <property type="evidence" value="ECO:0000314"/>
    <property type="project" value="WormBase"/>
</dbReference>
<dbReference type="GO" id="GO:0046963">
    <property type="term" value="P:3'-phosphoadenosine 5'-phosphosulfate transport"/>
    <property type="evidence" value="ECO:0000314"/>
    <property type="project" value="WormBase"/>
</dbReference>
<dbReference type="GO" id="GO:0055085">
    <property type="term" value="P:transmembrane transport"/>
    <property type="evidence" value="ECO:0000318"/>
    <property type="project" value="GO_Central"/>
</dbReference>
<dbReference type="InterPro" id="IPR013657">
    <property type="entry name" value="SCL35B1-4/HUT1"/>
</dbReference>
<dbReference type="PANTHER" id="PTHR10778:SF8">
    <property type="entry name" value="ADENOSINE 3'-PHOSPHO 5'-PHOSPHOSULFATE TRANSPORTER 2"/>
    <property type="match status" value="1"/>
</dbReference>
<dbReference type="PANTHER" id="PTHR10778">
    <property type="entry name" value="SOLUTE CARRIER FAMILY 35 MEMBER B"/>
    <property type="match status" value="1"/>
</dbReference>
<dbReference type="Pfam" id="PF08449">
    <property type="entry name" value="UAA"/>
    <property type="match status" value="1"/>
</dbReference>
<name>S35B3_CAEEL</name>
<organism>
    <name type="scientific">Caenorhabditis elegans</name>
    <dbReference type="NCBI Taxonomy" id="6239"/>
    <lineage>
        <taxon>Eukaryota</taxon>
        <taxon>Metazoa</taxon>
        <taxon>Ecdysozoa</taxon>
        <taxon>Nematoda</taxon>
        <taxon>Chromadorea</taxon>
        <taxon>Rhabditida</taxon>
        <taxon>Rhabditina</taxon>
        <taxon>Rhabditomorpha</taxon>
        <taxon>Rhabditoidea</taxon>
        <taxon>Rhabditidae</taxon>
        <taxon>Peloderinae</taxon>
        <taxon>Caenorhabditis</taxon>
    </lineage>
</organism>
<feature type="chain" id="PRO_0000213383" description="Adenosine 3'-phospho 5'-phosphosulfate transporter 2">
    <location>
        <begin position="1"/>
        <end position="364"/>
    </location>
</feature>
<feature type="transmembrane region" description="Helical" evidence="2">
    <location>
        <begin position="39"/>
        <end position="59"/>
    </location>
</feature>
<feature type="transmembrane region" description="Helical" evidence="2">
    <location>
        <begin position="74"/>
        <end position="94"/>
    </location>
</feature>
<feature type="transmembrane region" description="Helical" evidence="2">
    <location>
        <begin position="106"/>
        <end position="126"/>
    </location>
</feature>
<feature type="transmembrane region" description="Helical" evidence="2">
    <location>
        <begin position="131"/>
        <end position="151"/>
    </location>
</feature>
<feature type="transmembrane region" description="Helical" evidence="2">
    <location>
        <begin position="157"/>
        <end position="177"/>
    </location>
</feature>
<feature type="transmembrane region" description="Helical" evidence="2">
    <location>
        <begin position="187"/>
        <end position="206"/>
    </location>
</feature>
<feature type="transmembrane region" description="Helical" evidence="2">
    <location>
        <begin position="231"/>
        <end position="251"/>
    </location>
</feature>
<feature type="transmembrane region" description="Helical" evidence="2">
    <location>
        <begin position="257"/>
        <end position="277"/>
    </location>
</feature>
<feature type="transmembrane region" description="Helical" evidence="2">
    <location>
        <begin position="281"/>
        <end position="301"/>
    </location>
</feature>
<feature type="transmembrane region" description="Helical" evidence="2">
    <location>
        <begin position="310"/>
        <end position="330"/>
    </location>
</feature>
<feature type="splice variant" id="VSP_028734" description="In isoform b." evidence="3">
    <location>
        <begin position="2"/>
        <end position="118"/>
    </location>
</feature>
<accession>Q20787</accession>
<accession>Q1W0S3</accession>